<sequence>MANITAAMVKDLREKTGAGMMDCKSALNETAGDIEAAVDWLRKKGLAKAAKKAGRVAAEGLVAVESAGRHAALVEVNSETDFVARNDGFQAFVREAAKVALNSQGNVESLEAAHFPGSQTTVKDRLQELIATIGENMTLRRVATLAVSQGVIATYVHGQVSEGLGKIGVLVALESAGNVEFLSTLGRQIAMHVAATNPLALDASGIDPATVERESAILREKNAGKPDHVLAKIVESGLKSYYKEVTLLDQPFVHDTSKTVSQVLKEAEGKAGGPVKLAAFVRYALGEGIEKEEGPDFASEVAAAVKG</sequence>
<comment type="function">
    <text evidence="1">Associates with the EF-Tu.GDP complex and induces the exchange of GDP to GTP. It remains bound to the aminoacyl-tRNA.EF-Tu.GTP complex up to the GTP hydrolysis stage on the ribosome.</text>
</comment>
<comment type="subcellular location">
    <subcellularLocation>
        <location evidence="1">Cytoplasm</location>
    </subcellularLocation>
</comment>
<comment type="similarity">
    <text evidence="1">Belongs to the EF-Ts family.</text>
</comment>
<proteinExistence type="inferred from homology"/>
<evidence type="ECO:0000255" key="1">
    <source>
        <dbReference type="HAMAP-Rule" id="MF_00050"/>
    </source>
</evidence>
<name>EFTS_METS4</name>
<reference key="1">
    <citation type="submission" date="2008-02" db="EMBL/GenBank/DDBJ databases">
        <title>Complete sequence of chromosome of Methylobacterium sp. 4-46.</title>
        <authorList>
            <consortium name="US DOE Joint Genome Institute"/>
            <person name="Copeland A."/>
            <person name="Lucas S."/>
            <person name="Lapidus A."/>
            <person name="Glavina del Rio T."/>
            <person name="Dalin E."/>
            <person name="Tice H."/>
            <person name="Bruce D."/>
            <person name="Goodwin L."/>
            <person name="Pitluck S."/>
            <person name="Chertkov O."/>
            <person name="Brettin T."/>
            <person name="Detter J.C."/>
            <person name="Han C."/>
            <person name="Kuske C.R."/>
            <person name="Schmutz J."/>
            <person name="Larimer F."/>
            <person name="Land M."/>
            <person name="Hauser L."/>
            <person name="Kyrpides N."/>
            <person name="Ivanova N."/>
            <person name="Marx C.J."/>
            <person name="Richardson P."/>
        </authorList>
    </citation>
    <scope>NUCLEOTIDE SEQUENCE [LARGE SCALE GENOMIC DNA]</scope>
    <source>
        <strain>4-46</strain>
    </source>
</reference>
<organism>
    <name type="scientific">Methylobacterium sp. (strain 4-46)</name>
    <dbReference type="NCBI Taxonomy" id="426117"/>
    <lineage>
        <taxon>Bacteria</taxon>
        <taxon>Pseudomonadati</taxon>
        <taxon>Pseudomonadota</taxon>
        <taxon>Alphaproteobacteria</taxon>
        <taxon>Hyphomicrobiales</taxon>
        <taxon>Methylobacteriaceae</taxon>
        <taxon>Methylobacterium</taxon>
    </lineage>
</organism>
<protein>
    <recommendedName>
        <fullName evidence="1">Elongation factor Ts</fullName>
        <shortName evidence="1">EF-Ts</shortName>
    </recommendedName>
</protein>
<dbReference type="EMBL" id="CP000943">
    <property type="protein sequence ID" value="ACA19158.1"/>
    <property type="molecule type" value="Genomic_DNA"/>
</dbReference>
<dbReference type="RefSeq" id="WP_012334545.1">
    <property type="nucleotide sequence ID" value="NC_010511.1"/>
</dbReference>
<dbReference type="SMR" id="B0UCS1"/>
<dbReference type="STRING" id="426117.M446_4828"/>
<dbReference type="KEGG" id="met:M446_4828"/>
<dbReference type="eggNOG" id="COG0264">
    <property type="taxonomic scope" value="Bacteria"/>
</dbReference>
<dbReference type="HOGENOM" id="CLU_047155_2_0_5"/>
<dbReference type="GO" id="GO:0005737">
    <property type="term" value="C:cytoplasm"/>
    <property type="evidence" value="ECO:0007669"/>
    <property type="project" value="UniProtKB-SubCell"/>
</dbReference>
<dbReference type="GO" id="GO:0003746">
    <property type="term" value="F:translation elongation factor activity"/>
    <property type="evidence" value="ECO:0007669"/>
    <property type="project" value="UniProtKB-UniRule"/>
</dbReference>
<dbReference type="CDD" id="cd14275">
    <property type="entry name" value="UBA_EF-Ts"/>
    <property type="match status" value="1"/>
</dbReference>
<dbReference type="FunFam" id="1.10.8.10:FF:000001">
    <property type="entry name" value="Elongation factor Ts"/>
    <property type="match status" value="1"/>
</dbReference>
<dbReference type="Gene3D" id="1.10.286.20">
    <property type="match status" value="1"/>
</dbReference>
<dbReference type="Gene3D" id="1.10.8.10">
    <property type="entry name" value="DNA helicase RuvA subunit, C-terminal domain"/>
    <property type="match status" value="1"/>
</dbReference>
<dbReference type="Gene3D" id="3.30.479.20">
    <property type="entry name" value="Elongation factor Ts, dimerisation domain"/>
    <property type="match status" value="2"/>
</dbReference>
<dbReference type="HAMAP" id="MF_00050">
    <property type="entry name" value="EF_Ts"/>
    <property type="match status" value="1"/>
</dbReference>
<dbReference type="InterPro" id="IPR036402">
    <property type="entry name" value="EF-Ts_dimer_sf"/>
</dbReference>
<dbReference type="InterPro" id="IPR001816">
    <property type="entry name" value="Transl_elong_EFTs/EF1B"/>
</dbReference>
<dbReference type="InterPro" id="IPR014039">
    <property type="entry name" value="Transl_elong_EFTs/EF1B_dimer"/>
</dbReference>
<dbReference type="InterPro" id="IPR018101">
    <property type="entry name" value="Transl_elong_Ts_CS"/>
</dbReference>
<dbReference type="InterPro" id="IPR009060">
    <property type="entry name" value="UBA-like_sf"/>
</dbReference>
<dbReference type="NCBIfam" id="TIGR00116">
    <property type="entry name" value="tsf"/>
    <property type="match status" value="1"/>
</dbReference>
<dbReference type="PANTHER" id="PTHR11741">
    <property type="entry name" value="ELONGATION FACTOR TS"/>
    <property type="match status" value="1"/>
</dbReference>
<dbReference type="PANTHER" id="PTHR11741:SF0">
    <property type="entry name" value="ELONGATION FACTOR TS, MITOCHONDRIAL"/>
    <property type="match status" value="1"/>
</dbReference>
<dbReference type="Pfam" id="PF00889">
    <property type="entry name" value="EF_TS"/>
    <property type="match status" value="1"/>
</dbReference>
<dbReference type="SUPFAM" id="SSF54713">
    <property type="entry name" value="Elongation factor Ts (EF-Ts), dimerisation domain"/>
    <property type="match status" value="2"/>
</dbReference>
<dbReference type="SUPFAM" id="SSF46934">
    <property type="entry name" value="UBA-like"/>
    <property type="match status" value="1"/>
</dbReference>
<dbReference type="PROSITE" id="PS01126">
    <property type="entry name" value="EF_TS_1"/>
    <property type="match status" value="1"/>
</dbReference>
<dbReference type="PROSITE" id="PS01127">
    <property type="entry name" value="EF_TS_2"/>
    <property type="match status" value="1"/>
</dbReference>
<keyword id="KW-0963">Cytoplasm</keyword>
<keyword id="KW-0251">Elongation factor</keyword>
<keyword id="KW-0648">Protein biosynthesis</keyword>
<feature type="chain" id="PRO_1000116761" description="Elongation factor Ts">
    <location>
        <begin position="1"/>
        <end position="307"/>
    </location>
</feature>
<feature type="region of interest" description="Involved in Mg(2+) ion dislocation from EF-Tu" evidence="1">
    <location>
        <begin position="80"/>
        <end position="83"/>
    </location>
</feature>
<accession>B0UCS1</accession>
<gene>
    <name evidence="1" type="primary">tsf</name>
    <name type="ordered locus">M446_4828</name>
</gene>